<reference key="1">
    <citation type="submission" date="1995-12" db="EMBL/GenBank/DDBJ databases">
        <authorList>
            <person name="Yamamoto Y."/>
        </authorList>
    </citation>
    <scope>NUCLEOTIDE SEQUENCE [GENOMIC DNA]</scope>
    <source>
        <strain>K12 / W3110 / ATCC 27325 / DSM 5911</strain>
    </source>
</reference>
<reference key="2">
    <citation type="submission" date="1996-02" db="EMBL/GenBank/DDBJ databases">
        <title>Systematic sequencing of the Escherichia coli genome: analysis of the 4.0 - 6.0 min (189,987 - 281,416bp) region.</title>
        <authorList>
            <person name="Takemoto K."/>
            <person name="Mori H."/>
            <person name="Murayama N."/>
            <person name="Kataoka K."/>
            <person name="Yano M."/>
            <person name="Itoh T."/>
            <person name="Yamamoto Y."/>
            <person name="Inokuchi H."/>
            <person name="Miki T."/>
            <person name="Hatada E."/>
            <person name="Fukuda R."/>
            <person name="Ichihara S."/>
            <person name="Mizuno T."/>
            <person name="Makino K."/>
            <person name="Nakata A."/>
            <person name="Yura T."/>
            <person name="Sampei G."/>
            <person name="Mizobuchi K."/>
        </authorList>
    </citation>
    <scope>NUCLEOTIDE SEQUENCE [LARGE SCALE GENOMIC DNA]</scope>
    <source>
        <strain>K12 / W3110 / ATCC 27325 / DSM 5911</strain>
    </source>
</reference>
<reference key="3">
    <citation type="submission" date="1997-01" db="EMBL/GenBank/DDBJ databases">
        <title>Sequence of minutes 4-25 of Escherichia coli.</title>
        <authorList>
            <person name="Chung E."/>
            <person name="Allen E."/>
            <person name="Araujo R."/>
            <person name="Aparicio A.M."/>
            <person name="Davis K."/>
            <person name="Duncan M."/>
            <person name="Federspiel N."/>
            <person name="Hyman R."/>
            <person name="Kalman S."/>
            <person name="Komp C."/>
            <person name="Kurdi O."/>
            <person name="Lew H."/>
            <person name="Lin D."/>
            <person name="Namath A."/>
            <person name="Oefner P."/>
            <person name="Roberts D."/>
            <person name="Schramm S."/>
            <person name="Davis R.W."/>
        </authorList>
    </citation>
    <scope>NUCLEOTIDE SEQUENCE [LARGE SCALE GENOMIC DNA]</scope>
    <source>
        <strain>K12 / MG1655 / ATCC 47076</strain>
    </source>
</reference>
<reference key="4">
    <citation type="journal article" date="1997" name="Science">
        <title>The complete genome sequence of Escherichia coli K-12.</title>
        <authorList>
            <person name="Blattner F.R."/>
            <person name="Plunkett G. III"/>
            <person name="Bloch C.A."/>
            <person name="Perna N.T."/>
            <person name="Burland V."/>
            <person name="Riley M."/>
            <person name="Collado-Vides J."/>
            <person name="Glasner J.D."/>
            <person name="Rode C.K."/>
            <person name="Mayhew G.F."/>
            <person name="Gregor J."/>
            <person name="Davis N.W."/>
            <person name="Kirkpatrick H.A."/>
            <person name="Goeden M.A."/>
            <person name="Rose D.J."/>
            <person name="Mau B."/>
            <person name="Shao Y."/>
        </authorList>
    </citation>
    <scope>NUCLEOTIDE SEQUENCE [LARGE SCALE GENOMIC DNA]</scope>
    <source>
        <strain>K12 / MG1655 / ATCC 47076</strain>
    </source>
</reference>
<reference key="5">
    <citation type="journal article" date="2006" name="Mol. Syst. Biol.">
        <title>Highly accurate genome sequences of Escherichia coli K-12 strains MG1655 and W3110.</title>
        <authorList>
            <person name="Hayashi K."/>
            <person name="Morooka N."/>
            <person name="Yamamoto Y."/>
            <person name="Fujita K."/>
            <person name="Isono K."/>
            <person name="Choi S."/>
            <person name="Ohtsubo E."/>
            <person name="Baba T."/>
            <person name="Wanner B.L."/>
            <person name="Mori H."/>
            <person name="Horiuchi T."/>
        </authorList>
    </citation>
    <scope>NUCLEOTIDE SEQUENCE [LARGE SCALE GENOMIC DNA]</scope>
    <scope>SEQUENCE REVISION TO 176</scope>
    <source>
        <strain>K12 / W3110 / ATCC 27325 / DSM 5911</strain>
    </source>
</reference>
<reference key="6">
    <citation type="submission" date="2008-01" db="PDB data bank">
        <title>Crystal structure of E.coli yaeQ protein.</title>
        <authorList>
            <consortium name="Midwest center for structural genomics (MCSG)"/>
        </authorList>
    </citation>
    <scope>X-RAY CRYSTALLOGRAPHY (2.7 ANGSTROMS) OF 2-181</scope>
    <source>
        <strain>K12</strain>
    </source>
</reference>
<name>YAEQ_ECOLI</name>
<sequence length="181" mass="20877">MALKATIYKATVNVADLDRNQFLDASLTLARHPSETQERMMLRLLAWLKYADERLQFTRGLCADDEPEAWLRNDHLGIDLWIELGLPDERRIKKACTQAAEVALFTYNSRAAQIWWQQNQSKCVQFANLSVWYLDDEQLAKVSAFADRTMTLQATIQDGVIWLSDDKNNLEVNLTAWQQPS</sequence>
<feature type="chain" id="PRO_0000168528" description="Uncharacterized protein YaeQ">
    <location>
        <begin position="1"/>
        <end position="181"/>
    </location>
</feature>
<feature type="strand" evidence="1">
    <location>
        <begin position="6"/>
        <end position="16"/>
    </location>
</feature>
<feature type="turn" evidence="1">
    <location>
        <begin position="17"/>
        <end position="20"/>
    </location>
</feature>
<feature type="strand" evidence="1">
    <location>
        <begin position="21"/>
        <end position="31"/>
    </location>
</feature>
<feature type="helix" evidence="1">
    <location>
        <begin position="37"/>
        <end position="49"/>
    </location>
</feature>
<feature type="strand" evidence="1">
    <location>
        <begin position="55"/>
        <end position="57"/>
    </location>
</feature>
<feature type="strand" evidence="1">
    <location>
        <begin position="68"/>
        <end position="72"/>
    </location>
</feature>
<feature type="strand" evidence="1">
    <location>
        <begin position="78"/>
        <end position="85"/>
    </location>
</feature>
<feature type="helix" evidence="1">
    <location>
        <begin position="89"/>
        <end position="98"/>
    </location>
</feature>
<feature type="strand" evidence="1">
    <location>
        <begin position="99"/>
        <end position="106"/>
    </location>
</feature>
<feature type="helix" evidence="1">
    <location>
        <begin position="109"/>
        <end position="117"/>
    </location>
</feature>
<feature type="helix" evidence="1">
    <location>
        <begin position="120"/>
        <end position="123"/>
    </location>
</feature>
<feature type="strand" evidence="1">
    <location>
        <begin position="129"/>
        <end position="133"/>
    </location>
</feature>
<feature type="helix" evidence="1">
    <location>
        <begin position="136"/>
        <end position="144"/>
    </location>
</feature>
<feature type="strand" evidence="1">
    <location>
        <begin position="148"/>
        <end position="157"/>
    </location>
</feature>
<feature type="strand" evidence="1">
    <location>
        <begin position="160"/>
        <end position="164"/>
    </location>
</feature>
<feature type="strand" evidence="1">
    <location>
        <begin position="169"/>
        <end position="172"/>
    </location>
</feature>
<feature type="strand" evidence="1">
    <location>
        <begin position="175"/>
        <end position="178"/>
    </location>
</feature>
<accession>P0AA97</accession>
<accession>P52100</accession>
<accession>P77620</accession>
<accession>Q9R2E2</accession>
<gene>
    <name type="primary">yaeQ</name>
    <name type="ordered locus">b0190</name>
    <name type="ordered locus">JW0186</name>
</gene>
<dbReference type="EMBL" id="D49445">
    <property type="protein sequence ID" value="BAA08431.1"/>
    <property type="molecule type" value="Genomic_DNA"/>
</dbReference>
<dbReference type="EMBL" id="U70214">
    <property type="protein sequence ID" value="AAB08618.1"/>
    <property type="molecule type" value="Genomic_DNA"/>
</dbReference>
<dbReference type="EMBL" id="U00096">
    <property type="protein sequence ID" value="AAC73301.1"/>
    <property type="molecule type" value="Genomic_DNA"/>
</dbReference>
<dbReference type="EMBL" id="AP009048">
    <property type="protein sequence ID" value="BAA77866.2"/>
    <property type="molecule type" value="Genomic_DNA"/>
</dbReference>
<dbReference type="PIR" id="F64743">
    <property type="entry name" value="F64743"/>
</dbReference>
<dbReference type="RefSeq" id="NP_414732.1">
    <property type="nucleotide sequence ID" value="NC_000913.3"/>
</dbReference>
<dbReference type="RefSeq" id="WP_001185290.1">
    <property type="nucleotide sequence ID" value="NZ_SSZK01000004.1"/>
</dbReference>
<dbReference type="PDB" id="3C0U">
    <property type="method" value="X-ray"/>
    <property type="resolution" value="2.70 A"/>
    <property type="chains" value="A/B=2-181"/>
</dbReference>
<dbReference type="PDBsum" id="3C0U"/>
<dbReference type="SMR" id="P0AA97"/>
<dbReference type="BioGRID" id="4261683">
    <property type="interactions" value="173"/>
</dbReference>
<dbReference type="FunCoup" id="P0AA97">
    <property type="interactions" value="37"/>
</dbReference>
<dbReference type="IntAct" id="P0AA97">
    <property type="interactions" value="4"/>
</dbReference>
<dbReference type="STRING" id="511145.b0190"/>
<dbReference type="jPOST" id="P0AA97"/>
<dbReference type="PaxDb" id="511145-b0190"/>
<dbReference type="DNASU" id="946809"/>
<dbReference type="EnsemblBacteria" id="AAC73301">
    <property type="protein sequence ID" value="AAC73301"/>
    <property type="gene ID" value="b0190"/>
</dbReference>
<dbReference type="GeneID" id="946809"/>
<dbReference type="KEGG" id="ecj:JW0186"/>
<dbReference type="KEGG" id="eco:b0190"/>
<dbReference type="KEGG" id="ecoc:C3026_00880"/>
<dbReference type="PATRIC" id="fig|511145.12.peg.198"/>
<dbReference type="EchoBASE" id="EB3014"/>
<dbReference type="eggNOG" id="COG4681">
    <property type="taxonomic scope" value="Bacteria"/>
</dbReference>
<dbReference type="HOGENOM" id="CLU_096741_0_0_6"/>
<dbReference type="InParanoid" id="P0AA97"/>
<dbReference type="OMA" id="DERMMIR"/>
<dbReference type="OrthoDB" id="5293309at2"/>
<dbReference type="PhylomeDB" id="P0AA97"/>
<dbReference type="BioCyc" id="EcoCyc:G6098-MONOMER"/>
<dbReference type="EvolutionaryTrace" id="P0AA97"/>
<dbReference type="PRO" id="PR:P0AA97"/>
<dbReference type="Proteomes" id="UP000000625">
    <property type="component" value="Chromosome"/>
</dbReference>
<dbReference type="CDD" id="cd22368">
    <property type="entry name" value="YaeQ-like"/>
    <property type="match status" value="1"/>
</dbReference>
<dbReference type="Gene3D" id="3.10.640.10">
    <property type="entry name" value="Restriction endonuclease-like alpha-beta roll domain"/>
    <property type="match status" value="1"/>
</dbReference>
<dbReference type="InterPro" id="IPR011335">
    <property type="entry name" value="Restrct_endonuc-II-like"/>
</dbReference>
<dbReference type="InterPro" id="IPR009822">
    <property type="entry name" value="YaeQ"/>
</dbReference>
<dbReference type="InterPro" id="IPR038590">
    <property type="entry name" value="YaeQ_sf"/>
</dbReference>
<dbReference type="PANTHER" id="PTHR38784">
    <property type="entry name" value="SUCROSE PHOSPHORYLASE"/>
    <property type="match status" value="1"/>
</dbReference>
<dbReference type="PANTHER" id="PTHR38784:SF1">
    <property type="entry name" value="SUCROSE PHOSPHORYLASE"/>
    <property type="match status" value="1"/>
</dbReference>
<dbReference type="Pfam" id="PF07152">
    <property type="entry name" value="YaeQ"/>
    <property type="match status" value="1"/>
</dbReference>
<dbReference type="PIRSF" id="PIRSF011484">
    <property type="entry name" value="YaeQ"/>
    <property type="match status" value="1"/>
</dbReference>
<dbReference type="SMART" id="SM01322">
    <property type="entry name" value="YaeQ"/>
    <property type="match status" value="1"/>
</dbReference>
<dbReference type="SUPFAM" id="SSF52980">
    <property type="entry name" value="Restriction endonuclease-like"/>
    <property type="match status" value="1"/>
</dbReference>
<organism>
    <name type="scientific">Escherichia coli (strain K12)</name>
    <dbReference type="NCBI Taxonomy" id="83333"/>
    <lineage>
        <taxon>Bacteria</taxon>
        <taxon>Pseudomonadati</taxon>
        <taxon>Pseudomonadota</taxon>
        <taxon>Gammaproteobacteria</taxon>
        <taxon>Enterobacterales</taxon>
        <taxon>Enterobacteriaceae</taxon>
        <taxon>Escherichia</taxon>
    </lineage>
</organism>
<keyword id="KW-0002">3D-structure</keyword>
<keyword id="KW-1185">Reference proteome</keyword>
<proteinExistence type="evidence at protein level"/>
<evidence type="ECO:0007829" key="1">
    <source>
        <dbReference type="PDB" id="3C0U"/>
    </source>
</evidence>
<protein>
    <recommendedName>
        <fullName>Uncharacterized protein YaeQ</fullName>
    </recommendedName>
</protein>